<accession>B1I0W9</accession>
<organism>
    <name type="scientific">Desulforudis audaxviator (strain MP104C)</name>
    <dbReference type="NCBI Taxonomy" id="477974"/>
    <lineage>
        <taxon>Bacteria</taxon>
        <taxon>Bacillati</taxon>
        <taxon>Bacillota</taxon>
        <taxon>Clostridia</taxon>
        <taxon>Thermoanaerobacterales</taxon>
        <taxon>Candidatus Desulforudaceae</taxon>
        <taxon>Candidatus Desulforudis</taxon>
    </lineage>
</organism>
<proteinExistence type="inferred from homology"/>
<keyword id="KW-0963">Cytoplasm</keyword>
<keyword id="KW-0227">DNA damage</keyword>
<keyword id="KW-0228">DNA excision</keyword>
<keyword id="KW-0234">DNA repair</keyword>
<keyword id="KW-0267">Excision nuclease</keyword>
<keyword id="KW-1185">Reference proteome</keyword>
<keyword id="KW-0742">SOS response</keyword>
<comment type="function">
    <text evidence="1">The UvrABC repair system catalyzes the recognition and processing of DNA lesions. UvrC both incises the 5' and 3' sides of the lesion. The N-terminal half is responsible for the 3' incision and the C-terminal half is responsible for the 5' incision.</text>
</comment>
<comment type="subunit">
    <text evidence="1">Interacts with UvrB in an incision complex.</text>
</comment>
<comment type="subcellular location">
    <subcellularLocation>
        <location evidence="1">Cytoplasm</location>
    </subcellularLocation>
</comment>
<comment type="similarity">
    <text evidence="1">Belongs to the UvrC family.</text>
</comment>
<name>UVRC_DESAP</name>
<gene>
    <name evidence="1" type="primary">uvrC</name>
    <name type="ordered locus">Daud_0295</name>
</gene>
<evidence type="ECO:0000255" key="1">
    <source>
        <dbReference type="HAMAP-Rule" id="MF_00203"/>
    </source>
</evidence>
<protein>
    <recommendedName>
        <fullName evidence="1">UvrABC system protein C</fullName>
        <shortName evidence="1">Protein UvrC</shortName>
    </recommendedName>
    <alternativeName>
        <fullName evidence="1">Excinuclease ABC subunit C</fullName>
    </alternativeName>
</protein>
<reference key="1">
    <citation type="submission" date="2007-10" db="EMBL/GenBank/DDBJ databases">
        <title>Complete sequence of chromosome of Desulforudis audaxviator MP104C.</title>
        <authorList>
            <person name="Copeland A."/>
            <person name="Lucas S."/>
            <person name="Lapidus A."/>
            <person name="Barry K."/>
            <person name="Glavina del Rio T."/>
            <person name="Dalin E."/>
            <person name="Tice H."/>
            <person name="Bruce D."/>
            <person name="Pitluck S."/>
            <person name="Lowry S.R."/>
            <person name="Larimer F."/>
            <person name="Land M.L."/>
            <person name="Hauser L."/>
            <person name="Kyrpides N."/>
            <person name="Ivanova N.N."/>
            <person name="Richardson P."/>
        </authorList>
    </citation>
    <scope>NUCLEOTIDE SEQUENCE [LARGE SCALE GENOMIC DNA]</scope>
    <source>
        <strain>MP104C</strain>
    </source>
</reference>
<dbReference type="EMBL" id="CP000860">
    <property type="protein sequence ID" value="ACA58856.1"/>
    <property type="molecule type" value="Genomic_DNA"/>
</dbReference>
<dbReference type="RefSeq" id="WP_012301448.1">
    <property type="nucleotide sequence ID" value="NC_010424.1"/>
</dbReference>
<dbReference type="SMR" id="B1I0W9"/>
<dbReference type="STRING" id="477974.Daud_0295"/>
<dbReference type="KEGG" id="dau:Daud_0295"/>
<dbReference type="eggNOG" id="COG0322">
    <property type="taxonomic scope" value="Bacteria"/>
</dbReference>
<dbReference type="HOGENOM" id="CLU_014841_3_2_9"/>
<dbReference type="OrthoDB" id="9804933at2"/>
<dbReference type="Proteomes" id="UP000008544">
    <property type="component" value="Chromosome"/>
</dbReference>
<dbReference type="GO" id="GO:0005737">
    <property type="term" value="C:cytoplasm"/>
    <property type="evidence" value="ECO:0007669"/>
    <property type="project" value="UniProtKB-SubCell"/>
</dbReference>
<dbReference type="GO" id="GO:0009380">
    <property type="term" value="C:excinuclease repair complex"/>
    <property type="evidence" value="ECO:0007669"/>
    <property type="project" value="InterPro"/>
</dbReference>
<dbReference type="GO" id="GO:0003677">
    <property type="term" value="F:DNA binding"/>
    <property type="evidence" value="ECO:0007669"/>
    <property type="project" value="UniProtKB-UniRule"/>
</dbReference>
<dbReference type="GO" id="GO:0009381">
    <property type="term" value="F:excinuclease ABC activity"/>
    <property type="evidence" value="ECO:0007669"/>
    <property type="project" value="UniProtKB-UniRule"/>
</dbReference>
<dbReference type="GO" id="GO:0006289">
    <property type="term" value="P:nucleotide-excision repair"/>
    <property type="evidence" value="ECO:0007669"/>
    <property type="project" value="UniProtKB-UniRule"/>
</dbReference>
<dbReference type="GO" id="GO:0009432">
    <property type="term" value="P:SOS response"/>
    <property type="evidence" value="ECO:0007669"/>
    <property type="project" value="UniProtKB-UniRule"/>
</dbReference>
<dbReference type="CDD" id="cd10434">
    <property type="entry name" value="GIY-YIG_UvrC_Cho"/>
    <property type="match status" value="1"/>
</dbReference>
<dbReference type="FunFam" id="3.40.1440.10:FF:000001">
    <property type="entry name" value="UvrABC system protein C"/>
    <property type="match status" value="1"/>
</dbReference>
<dbReference type="Gene3D" id="1.10.150.20">
    <property type="entry name" value="5' to 3' exonuclease, C-terminal subdomain"/>
    <property type="match status" value="1"/>
</dbReference>
<dbReference type="Gene3D" id="3.40.1440.10">
    <property type="entry name" value="GIY-YIG endonuclease"/>
    <property type="match status" value="1"/>
</dbReference>
<dbReference type="Gene3D" id="4.10.860.10">
    <property type="entry name" value="UVR domain"/>
    <property type="match status" value="1"/>
</dbReference>
<dbReference type="Gene3D" id="3.30.420.340">
    <property type="entry name" value="UvrC, RNAse H endonuclease domain"/>
    <property type="match status" value="1"/>
</dbReference>
<dbReference type="HAMAP" id="MF_00203">
    <property type="entry name" value="UvrC"/>
    <property type="match status" value="1"/>
</dbReference>
<dbReference type="InterPro" id="IPR000305">
    <property type="entry name" value="GIY-YIG_endonuc"/>
</dbReference>
<dbReference type="InterPro" id="IPR035901">
    <property type="entry name" value="GIY-YIG_endonuc_sf"/>
</dbReference>
<dbReference type="InterPro" id="IPR047296">
    <property type="entry name" value="GIY-YIG_UvrC_Cho"/>
</dbReference>
<dbReference type="InterPro" id="IPR010994">
    <property type="entry name" value="RuvA_2-like"/>
</dbReference>
<dbReference type="InterPro" id="IPR001943">
    <property type="entry name" value="UVR_dom"/>
</dbReference>
<dbReference type="InterPro" id="IPR036876">
    <property type="entry name" value="UVR_dom_sf"/>
</dbReference>
<dbReference type="InterPro" id="IPR050066">
    <property type="entry name" value="UvrABC_protein_C"/>
</dbReference>
<dbReference type="InterPro" id="IPR004791">
    <property type="entry name" value="UvrC"/>
</dbReference>
<dbReference type="InterPro" id="IPR001162">
    <property type="entry name" value="UvrC_RNase_H_dom"/>
</dbReference>
<dbReference type="InterPro" id="IPR038476">
    <property type="entry name" value="UvrC_RNase_H_dom_sf"/>
</dbReference>
<dbReference type="NCBIfam" id="NF001824">
    <property type="entry name" value="PRK00558.1-5"/>
    <property type="match status" value="1"/>
</dbReference>
<dbReference type="NCBIfam" id="TIGR00194">
    <property type="entry name" value="uvrC"/>
    <property type="match status" value="1"/>
</dbReference>
<dbReference type="PANTHER" id="PTHR30562:SF1">
    <property type="entry name" value="UVRABC SYSTEM PROTEIN C"/>
    <property type="match status" value="1"/>
</dbReference>
<dbReference type="PANTHER" id="PTHR30562">
    <property type="entry name" value="UVRC/OXIDOREDUCTASE"/>
    <property type="match status" value="1"/>
</dbReference>
<dbReference type="Pfam" id="PF01541">
    <property type="entry name" value="GIY-YIG"/>
    <property type="match status" value="1"/>
</dbReference>
<dbReference type="Pfam" id="PF14520">
    <property type="entry name" value="HHH_5"/>
    <property type="match status" value="1"/>
</dbReference>
<dbReference type="Pfam" id="PF02151">
    <property type="entry name" value="UVR"/>
    <property type="match status" value="1"/>
</dbReference>
<dbReference type="Pfam" id="PF22920">
    <property type="entry name" value="UvrC_RNaseH"/>
    <property type="match status" value="1"/>
</dbReference>
<dbReference type="Pfam" id="PF08459">
    <property type="entry name" value="UvrC_RNaseH_dom"/>
    <property type="match status" value="1"/>
</dbReference>
<dbReference type="SMART" id="SM00465">
    <property type="entry name" value="GIYc"/>
    <property type="match status" value="1"/>
</dbReference>
<dbReference type="SUPFAM" id="SSF46600">
    <property type="entry name" value="C-terminal UvrC-binding domain of UvrB"/>
    <property type="match status" value="1"/>
</dbReference>
<dbReference type="SUPFAM" id="SSF82771">
    <property type="entry name" value="GIY-YIG endonuclease"/>
    <property type="match status" value="1"/>
</dbReference>
<dbReference type="SUPFAM" id="SSF47781">
    <property type="entry name" value="RuvA domain 2-like"/>
    <property type="match status" value="1"/>
</dbReference>
<dbReference type="PROSITE" id="PS50164">
    <property type="entry name" value="GIY_YIG"/>
    <property type="match status" value="1"/>
</dbReference>
<dbReference type="PROSITE" id="PS50151">
    <property type="entry name" value="UVR"/>
    <property type="match status" value="1"/>
</dbReference>
<dbReference type="PROSITE" id="PS50165">
    <property type="entry name" value="UVRC"/>
    <property type="match status" value="1"/>
</dbReference>
<feature type="chain" id="PRO_1000099474" description="UvrABC system protein C">
    <location>
        <begin position="1"/>
        <end position="614"/>
    </location>
</feature>
<feature type="domain" description="GIY-YIG" evidence="1">
    <location>
        <begin position="12"/>
        <end position="89"/>
    </location>
</feature>
<feature type="domain" description="UVR" evidence="1">
    <location>
        <begin position="198"/>
        <end position="233"/>
    </location>
</feature>
<sequence>MEPAEKVKHFPDKPGVYLFRGARGEVLYVGKAVSLKNRVRSYFTGARSDKVQALVGKTRDVECLVTGSEIEALILESNLIKEHRPRYNVVLKDDKSYPYLKVTVQEEYPRIFLTRAQPRDGARYFGPYPSAAAVHETVRLLKKLFPLRSCRQTRFRQQRPCLNHHIGRCLGPCSGTVDPERYRAMVQEVLLFLEGRHADLVRGLARKMEAAAANLEFERAAELRDQLRAVEQVLARQSIVSPGREDRDVLALARDGNRGRVIVLEIRDGKLLGRHSLDLQGIAERSDAEVLAAFLKQYYREAGLIPPEVLLPVPLGEEQGLIAEWLGLRRQGRVRLHVPRRGRKRELVRLAEQNAAEARAQMEFERDAGEALAELAAVLGLDQAPARLEGYDISNLQGAQTVGVMVVFEDGRPAPGEYRQFRVRETAGTPNDFAAMREVVARRFARAREEGKLIATGRLSSRDARFHRLPDLVLVDGGKGQLSAALEGLRETGFEAVPVFALTKEEEKIFAPGRSDPVPVPPGSQALFLLQHLRDEAHRFAVDTHRRTRSRESLRSLLEEIDGIGPARRRALQKAFPSLDALKGATLAELAAVPSMNRKAAQAVYDYFQDTPTE</sequence>